<comment type="function">
    <text evidence="1">One of the primary rRNA binding proteins. Required for association of the 30S and 50S subunits to form the 70S ribosome, for tRNA binding and peptide bond formation. It has been suggested to have peptidyltransferase activity; this is somewhat controversial. Makes several contacts with the 16S rRNA in the 70S ribosome.</text>
</comment>
<comment type="subunit">
    <text evidence="1">Part of the 50S ribosomal subunit. Forms a bridge to the 30S subunit in the 70S ribosome.</text>
</comment>
<comment type="similarity">
    <text evidence="1">Belongs to the universal ribosomal protein uL2 family.</text>
</comment>
<accession>A2RC17</accession>
<gene>
    <name evidence="1" type="primary">rplB</name>
    <name type="ordered locus">SpyM50047</name>
</gene>
<protein>
    <recommendedName>
        <fullName evidence="1">Large ribosomal subunit protein uL2</fullName>
    </recommendedName>
    <alternativeName>
        <fullName evidence="3">50S ribosomal protein L2</fullName>
    </alternativeName>
</protein>
<name>RL2_STRPG</name>
<reference key="1">
    <citation type="journal article" date="2007" name="J. Bacteriol.">
        <title>Complete genome of acute rheumatic fever-associated serotype M5 Streptococcus pyogenes strain Manfredo.</title>
        <authorList>
            <person name="Holden M.T.G."/>
            <person name="Scott A."/>
            <person name="Cherevach I."/>
            <person name="Chillingworth T."/>
            <person name="Churcher C."/>
            <person name="Cronin A."/>
            <person name="Dowd L."/>
            <person name="Feltwell T."/>
            <person name="Hamlin N."/>
            <person name="Holroyd S."/>
            <person name="Jagels K."/>
            <person name="Moule S."/>
            <person name="Mungall K."/>
            <person name="Quail M.A."/>
            <person name="Price C."/>
            <person name="Rabbinowitsch E."/>
            <person name="Sharp S."/>
            <person name="Skelton J."/>
            <person name="Whitehead S."/>
            <person name="Barrell B.G."/>
            <person name="Kehoe M."/>
            <person name="Parkhill J."/>
        </authorList>
    </citation>
    <scope>NUCLEOTIDE SEQUENCE [LARGE SCALE GENOMIC DNA]</scope>
    <source>
        <strain>Manfredo</strain>
    </source>
</reference>
<sequence>MGIKVYKPTTNGRRNMTSLDFAEITTSTPEKSLLVSLKSKAGRNNNGRITVRHQGGGHKRHYRLIDFKRNKDGVEAVVKTIEYDPNRTANIALVHYTDGVKAYIIAPKGLEVGQRIVSGPDADIKVGNALPLANIPVGTVVHNIELKPGKGGELVRAAGASAQVLGQEGKYVLVRLQSGEVRMILGTCRATIGTVGNEQQSLVNIGKAGRSRWKGIRPTVRGSVMNPNDHPHGGGEGKAPVGRKAPSTPWGKPALGLKTRNKKAKSDKLIVRRRNEK</sequence>
<feature type="chain" id="PRO_0000310025" description="Large ribosomal subunit protein uL2">
    <location>
        <begin position="1"/>
        <end position="277"/>
    </location>
</feature>
<feature type="region of interest" description="Disordered" evidence="2">
    <location>
        <begin position="219"/>
        <end position="277"/>
    </location>
</feature>
<feature type="compositionally biased region" description="Basic and acidic residues" evidence="2">
    <location>
        <begin position="264"/>
        <end position="277"/>
    </location>
</feature>
<proteinExistence type="inferred from homology"/>
<dbReference type="EMBL" id="AM295007">
    <property type="protein sequence ID" value="CAM29389.1"/>
    <property type="molecule type" value="Genomic_DNA"/>
</dbReference>
<dbReference type="RefSeq" id="WP_002986654.1">
    <property type="nucleotide sequence ID" value="NC_009332.1"/>
</dbReference>
<dbReference type="SMR" id="A2RC17"/>
<dbReference type="GeneID" id="83689570"/>
<dbReference type="KEGG" id="spf:SpyM50047"/>
<dbReference type="HOGENOM" id="CLU_036235_2_1_9"/>
<dbReference type="GO" id="GO:0015934">
    <property type="term" value="C:large ribosomal subunit"/>
    <property type="evidence" value="ECO:0007669"/>
    <property type="project" value="InterPro"/>
</dbReference>
<dbReference type="GO" id="GO:0019843">
    <property type="term" value="F:rRNA binding"/>
    <property type="evidence" value="ECO:0007669"/>
    <property type="project" value="UniProtKB-UniRule"/>
</dbReference>
<dbReference type="GO" id="GO:0003735">
    <property type="term" value="F:structural constituent of ribosome"/>
    <property type="evidence" value="ECO:0007669"/>
    <property type="project" value="InterPro"/>
</dbReference>
<dbReference type="GO" id="GO:0016740">
    <property type="term" value="F:transferase activity"/>
    <property type="evidence" value="ECO:0007669"/>
    <property type="project" value="InterPro"/>
</dbReference>
<dbReference type="GO" id="GO:0002181">
    <property type="term" value="P:cytoplasmic translation"/>
    <property type="evidence" value="ECO:0007669"/>
    <property type="project" value="TreeGrafter"/>
</dbReference>
<dbReference type="FunFam" id="2.30.30.30:FF:000001">
    <property type="entry name" value="50S ribosomal protein L2"/>
    <property type="match status" value="1"/>
</dbReference>
<dbReference type="FunFam" id="2.40.50.140:FF:000003">
    <property type="entry name" value="50S ribosomal protein L2"/>
    <property type="match status" value="1"/>
</dbReference>
<dbReference type="FunFam" id="4.10.950.10:FF:000001">
    <property type="entry name" value="50S ribosomal protein L2"/>
    <property type="match status" value="1"/>
</dbReference>
<dbReference type="Gene3D" id="2.30.30.30">
    <property type="match status" value="1"/>
</dbReference>
<dbReference type="Gene3D" id="2.40.50.140">
    <property type="entry name" value="Nucleic acid-binding proteins"/>
    <property type="match status" value="1"/>
</dbReference>
<dbReference type="Gene3D" id="4.10.950.10">
    <property type="entry name" value="Ribosomal protein L2, domain 3"/>
    <property type="match status" value="1"/>
</dbReference>
<dbReference type="HAMAP" id="MF_01320_B">
    <property type="entry name" value="Ribosomal_uL2_B"/>
    <property type="match status" value="1"/>
</dbReference>
<dbReference type="InterPro" id="IPR012340">
    <property type="entry name" value="NA-bd_OB-fold"/>
</dbReference>
<dbReference type="InterPro" id="IPR014722">
    <property type="entry name" value="Rib_uL2_dom2"/>
</dbReference>
<dbReference type="InterPro" id="IPR002171">
    <property type="entry name" value="Ribosomal_uL2"/>
</dbReference>
<dbReference type="InterPro" id="IPR005880">
    <property type="entry name" value="Ribosomal_uL2_bac/org-type"/>
</dbReference>
<dbReference type="InterPro" id="IPR022669">
    <property type="entry name" value="Ribosomal_uL2_C"/>
</dbReference>
<dbReference type="InterPro" id="IPR022671">
    <property type="entry name" value="Ribosomal_uL2_CS"/>
</dbReference>
<dbReference type="InterPro" id="IPR014726">
    <property type="entry name" value="Ribosomal_uL2_dom3"/>
</dbReference>
<dbReference type="InterPro" id="IPR022666">
    <property type="entry name" value="Ribosomal_uL2_RNA-bd_dom"/>
</dbReference>
<dbReference type="InterPro" id="IPR008991">
    <property type="entry name" value="Translation_prot_SH3-like_sf"/>
</dbReference>
<dbReference type="NCBIfam" id="TIGR01171">
    <property type="entry name" value="rplB_bact"/>
    <property type="match status" value="1"/>
</dbReference>
<dbReference type="PANTHER" id="PTHR13691:SF5">
    <property type="entry name" value="LARGE RIBOSOMAL SUBUNIT PROTEIN UL2M"/>
    <property type="match status" value="1"/>
</dbReference>
<dbReference type="PANTHER" id="PTHR13691">
    <property type="entry name" value="RIBOSOMAL PROTEIN L2"/>
    <property type="match status" value="1"/>
</dbReference>
<dbReference type="Pfam" id="PF00181">
    <property type="entry name" value="Ribosomal_L2"/>
    <property type="match status" value="1"/>
</dbReference>
<dbReference type="Pfam" id="PF03947">
    <property type="entry name" value="Ribosomal_L2_C"/>
    <property type="match status" value="1"/>
</dbReference>
<dbReference type="PIRSF" id="PIRSF002158">
    <property type="entry name" value="Ribosomal_L2"/>
    <property type="match status" value="1"/>
</dbReference>
<dbReference type="SMART" id="SM01383">
    <property type="entry name" value="Ribosomal_L2"/>
    <property type="match status" value="1"/>
</dbReference>
<dbReference type="SMART" id="SM01382">
    <property type="entry name" value="Ribosomal_L2_C"/>
    <property type="match status" value="1"/>
</dbReference>
<dbReference type="SUPFAM" id="SSF50249">
    <property type="entry name" value="Nucleic acid-binding proteins"/>
    <property type="match status" value="1"/>
</dbReference>
<dbReference type="SUPFAM" id="SSF50104">
    <property type="entry name" value="Translation proteins SH3-like domain"/>
    <property type="match status" value="1"/>
</dbReference>
<dbReference type="PROSITE" id="PS00467">
    <property type="entry name" value="RIBOSOMAL_L2"/>
    <property type="match status" value="1"/>
</dbReference>
<evidence type="ECO:0000255" key="1">
    <source>
        <dbReference type="HAMAP-Rule" id="MF_01320"/>
    </source>
</evidence>
<evidence type="ECO:0000256" key="2">
    <source>
        <dbReference type="SAM" id="MobiDB-lite"/>
    </source>
</evidence>
<evidence type="ECO:0000305" key="3"/>
<organism>
    <name type="scientific">Streptococcus pyogenes serotype M5 (strain Manfredo)</name>
    <dbReference type="NCBI Taxonomy" id="160491"/>
    <lineage>
        <taxon>Bacteria</taxon>
        <taxon>Bacillati</taxon>
        <taxon>Bacillota</taxon>
        <taxon>Bacilli</taxon>
        <taxon>Lactobacillales</taxon>
        <taxon>Streptococcaceae</taxon>
        <taxon>Streptococcus</taxon>
    </lineage>
</organism>
<keyword id="KW-0687">Ribonucleoprotein</keyword>
<keyword id="KW-0689">Ribosomal protein</keyword>
<keyword id="KW-0694">RNA-binding</keyword>
<keyword id="KW-0699">rRNA-binding</keyword>